<organism>
    <name type="scientific">Anaplasma phagocytophilum (strain HZ)</name>
    <dbReference type="NCBI Taxonomy" id="212042"/>
    <lineage>
        <taxon>Bacteria</taxon>
        <taxon>Pseudomonadati</taxon>
        <taxon>Pseudomonadota</taxon>
        <taxon>Alphaproteobacteria</taxon>
        <taxon>Rickettsiales</taxon>
        <taxon>Anaplasmataceae</taxon>
        <taxon>Anaplasma</taxon>
        <taxon>phagocytophilum group</taxon>
    </lineage>
</organism>
<proteinExistence type="inferred from homology"/>
<sequence length="124" mass="13197">MAVVKKKRNVVVGRVHICATYNNVIVTIADQQGHVLVTTSAGACNFKGSKKSTPYAAQETVARAVKAVIERNGMKTVSVCISGPGAGREAAIRAVQACNLNVTSIKDVTKLPHNGCKLPKRRRV</sequence>
<gene>
    <name evidence="1" type="primary">rpsK</name>
    <name type="ordered locus">APH_0302</name>
</gene>
<evidence type="ECO:0000255" key="1">
    <source>
        <dbReference type="HAMAP-Rule" id="MF_01310"/>
    </source>
</evidence>
<evidence type="ECO:0000305" key="2"/>
<accession>Q2GL37</accession>
<name>RS11_ANAPZ</name>
<protein>
    <recommendedName>
        <fullName evidence="1">Small ribosomal subunit protein uS11</fullName>
    </recommendedName>
    <alternativeName>
        <fullName evidence="2">30S ribosomal protein S11</fullName>
    </alternativeName>
</protein>
<keyword id="KW-0687">Ribonucleoprotein</keyword>
<keyword id="KW-0689">Ribosomal protein</keyword>
<keyword id="KW-0694">RNA-binding</keyword>
<keyword id="KW-0699">rRNA-binding</keyword>
<dbReference type="EMBL" id="CP000235">
    <property type="protein sequence ID" value="ABD43958.1"/>
    <property type="molecule type" value="Genomic_DNA"/>
</dbReference>
<dbReference type="RefSeq" id="WP_011450437.1">
    <property type="nucleotide sequence ID" value="NC_007797.1"/>
</dbReference>
<dbReference type="SMR" id="Q2GL37"/>
<dbReference type="STRING" id="212042.APH_0302"/>
<dbReference type="PaxDb" id="212042-APH_0302"/>
<dbReference type="EnsemblBacteria" id="ABD43958">
    <property type="protein sequence ID" value="ABD43958"/>
    <property type="gene ID" value="APH_0302"/>
</dbReference>
<dbReference type="GeneID" id="92747501"/>
<dbReference type="KEGG" id="aph:APH_0302"/>
<dbReference type="eggNOG" id="COG0100">
    <property type="taxonomic scope" value="Bacteria"/>
</dbReference>
<dbReference type="HOGENOM" id="CLU_072439_5_0_5"/>
<dbReference type="Proteomes" id="UP000001943">
    <property type="component" value="Chromosome"/>
</dbReference>
<dbReference type="GO" id="GO:1990904">
    <property type="term" value="C:ribonucleoprotein complex"/>
    <property type="evidence" value="ECO:0007669"/>
    <property type="project" value="UniProtKB-KW"/>
</dbReference>
<dbReference type="GO" id="GO:0005840">
    <property type="term" value="C:ribosome"/>
    <property type="evidence" value="ECO:0007669"/>
    <property type="project" value="UniProtKB-KW"/>
</dbReference>
<dbReference type="GO" id="GO:0019843">
    <property type="term" value="F:rRNA binding"/>
    <property type="evidence" value="ECO:0007669"/>
    <property type="project" value="UniProtKB-UniRule"/>
</dbReference>
<dbReference type="GO" id="GO:0003735">
    <property type="term" value="F:structural constituent of ribosome"/>
    <property type="evidence" value="ECO:0007669"/>
    <property type="project" value="InterPro"/>
</dbReference>
<dbReference type="GO" id="GO:0006412">
    <property type="term" value="P:translation"/>
    <property type="evidence" value="ECO:0007669"/>
    <property type="project" value="UniProtKB-UniRule"/>
</dbReference>
<dbReference type="Gene3D" id="3.30.420.80">
    <property type="entry name" value="Ribosomal protein S11"/>
    <property type="match status" value="1"/>
</dbReference>
<dbReference type="HAMAP" id="MF_01310">
    <property type="entry name" value="Ribosomal_uS11"/>
    <property type="match status" value="1"/>
</dbReference>
<dbReference type="InterPro" id="IPR001971">
    <property type="entry name" value="Ribosomal_uS11"/>
</dbReference>
<dbReference type="InterPro" id="IPR019981">
    <property type="entry name" value="Ribosomal_uS11_bac-type"/>
</dbReference>
<dbReference type="InterPro" id="IPR036967">
    <property type="entry name" value="Ribosomal_uS11_sf"/>
</dbReference>
<dbReference type="NCBIfam" id="NF003698">
    <property type="entry name" value="PRK05309.1"/>
    <property type="match status" value="1"/>
</dbReference>
<dbReference type="NCBIfam" id="TIGR03632">
    <property type="entry name" value="uS11_bact"/>
    <property type="match status" value="1"/>
</dbReference>
<dbReference type="PANTHER" id="PTHR11759">
    <property type="entry name" value="40S RIBOSOMAL PROTEIN S14/30S RIBOSOMAL PROTEIN S11"/>
    <property type="match status" value="1"/>
</dbReference>
<dbReference type="Pfam" id="PF00411">
    <property type="entry name" value="Ribosomal_S11"/>
    <property type="match status" value="1"/>
</dbReference>
<dbReference type="PIRSF" id="PIRSF002131">
    <property type="entry name" value="Ribosomal_S11"/>
    <property type="match status" value="1"/>
</dbReference>
<dbReference type="SUPFAM" id="SSF53137">
    <property type="entry name" value="Translational machinery components"/>
    <property type="match status" value="1"/>
</dbReference>
<feature type="chain" id="PRO_0000294713" description="Small ribosomal subunit protein uS11">
    <location>
        <begin position="1"/>
        <end position="124"/>
    </location>
</feature>
<reference key="1">
    <citation type="journal article" date="2006" name="PLoS Genet.">
        <title>Comparative genomics of emerging human ehrlichiosis agents.</title>
        <authorList>
            <person name="Dunning Hotopp J.C."/>
            <person name="Lin M."/>
            <person name="Madupu R."/>
            <person name="Crabtree J."/>
            <person name="Angiuoli S.V."/>
            <person name="Eisen J.A."/>
            <person name="Seshadri R."/>
            <person name="Ren Q."/>
            <person name="Wu M."/>
            <person name="Utterback T.R."/>
            <person name="Smith S."/>
            <person name="Lewis M."/>
            <person name="Khouri H."/>
            <person name="Zhang C."/>
            <person name="Niu H."/>
            <person name="Lin Q."/>
            <person name="Ohashi N."/>
            <person name="Zhi N."/>
            <person name="Nelson W.C."/>
            <person name="Brinkac L.M."/>
            <person name="Dodson R.J."/>
            <person name="Rosovitz M.J."/>
            <person name="Sundaram J.P."/>
            <person name="Daugherty S.C."/>
            <person name="Davidsen T."/>
            <person name="Durkin A.S."/>
            <person name="Gwinn M.L."/>
            <person name="Haft D.H."/>
            <person name="Selengut J.D."/>
            <person name="Sullivan S.A."/>
            <person name="Zafar N."/>
            <person name="Zhou L."/>
            <person name="Benahmed F."/>
            <person name="Forberger H."/>
            <person name="Halpin R."/>
            <person name="Mulligan S."/>
            <person name="Robinson J."/>
            <person name="White O."/>
            <person name="Rikihisa Y."/>
            <person name="Tettelin H."/>
        </authorList>
    </citation>
    <scope>NUCLEOTIDE SEQUENCE [LARGE SCALE GENOMIC DNA]</scope>
    <source>
        <strain>HZ</strain>
    </source>
</reference>
<comment type="function">
    <text evidence="1">Located on the platform of the 30S subunit, it bridges several disparate RNA helices of the 16S rRNA. Forms part of the Shine-Dalgarno cleft in the 70S ribosome.</text>
</comment>
<comment type="subunit">
    <text evidence="1">Part of the 30S ribosomal subunit. Interacts with proteins S7 and S18. Binds to IF-3.</text>
</comment>
<comment type="similarity">
    <text evidence="1">Belongs to the universal ribosomal protein uS11 family.</text>
</comment>